<comment type="subcellular location">
    <subcellularLocation>
        <location evidence="4">Membrane</location>
        <topology evidence="4">Multi-pass membrane protein</topology>
    </subcellularLocation>
</comment>
<comment type="similarity">
    <text evidence="4">Belongs to the 3-beta-HSD family.</text>
</comment>
<keyword id="KW-0472">Membrane</keyword>
<keyword id="KW-0520">NAD</keyword>
<keyword id="KW-0560">Oxidoreductase</keyword>
<keyword id="KW-1185">Reference proteome</keyword>
<keyword id="KW-0812">Transmembrane</keyword>
<keyword id="KW-1133">Transmembrane helix</keyword>
<sequence length="393" mass="44128">MDPKRSQKETVLITGGGGYFGFRLGCALNQKGVHVILFDISSPAETIPEGIKFIQGDICHLSDIEKAFQDADITCVFHIASYGMSGREQLNRNLIEEVNIGGTDNILQACQRRRVPRLVYTSTFNVIFGGQVIRNGDESLPYLPLHLHPDHYSRTKSIAEKKVLEANGTPLDRGDGVLRTCALRPAGIYGPGEQRHLPRIVSYIEKGLFKFVYGDPRSLVEFVHVDNLVQAHILASEALRADKGHIASGQPYFISDGRPVNNFEFFRPLVEGLGYTFPSTRLPLTLVYCFAFLTEMVHFILGRLYNFQPFLTRTEVYKTGVTHYFSLEKAKKELGYKAQPFDLQEAVEWFKAHGHGRSSGSRDSECFIWDGLLVFLLIIAVLIWLPSSVILSL</sequence>
<organism>
    <name type="scientific">Macaca fascicularis</name>
    <name type="common">Crab-eating macaque</name>
    <name type="synonym">Cynomolgus monkey</name>
    <dbReference type="NCBI Taxonomy" id="9541"/>
    <lineage>
        <taxon>Eukaryota</taxon>
        <taxon>Metazoa</taxon>
        <taxon>Chordata</taxon>
        <taxon>Craniata</taxon>
        <taxon>Vertebrata</taxon>
        <taxon>Euteleostomi</taxon>
        <taxon>Mammalia</taxon>
        <taxon>Eutheria</taxon>
        <taxon>Euarchontoglires</taxon>
        <taxon>Primates</taxon>
        <taxon>Haplorrhini</taxon>
        <taxon>Catarrhini</taxon>
        <taxon>Cercopithecidae</taxon>
        <taxon>Cercopithecinae</taxon>
        <taxon>Macaca</taxon>
    </lineage>
</organism>
<reference key="1">
    <citation type="submission" date="2005-06" db="EMBL/GenBank/DDBJ databases">
        <title>DNA sequences of macaque genes expressed in brain or testis and its evolutionary implications.</title>
        <authorList>
            <consortium name="International consortium for macaque cDNA sequencing and analysis"/>
        </authorList>
    </citation>
    <scope>NUCLEOTIDE SEQUENCE [LARGE SCALE MRNA]</scope>
    <source>
        <tissue>Testis</tissue>
    </source>
</reference>
<dbReference type="EC" id="1.1.1.-"/>
<dbReference type="EMBL" id="AB168754">
    <property type="protein sequence ID" value="BAE00861.1"/>
    <property type="molecule type" value="mRNA"/>
</dbReference>
<dbReference type="RefSeq" id="NP_001270911.1">
    <property type="nucleotide sequence ID" value="NM_001283982.1"/>
</dbReference>
<dbReference type="RefSeq" id="XP_005592697.1">
    <property type="nucleotide sequence ID" value="XM_005592640.2"/>
</dbReference>
<dbReference type="RefSeq" id="XP_005592698.1">
    <property type="nucleotide sequence ID" value="XM_005592641.4"/>
</dbReference>
<dbReference type="RefSeq" id="XP_005592699.1">
    <property type="nucleotide sequence ID" value="XM_005592642.2"/>
</dbReference>
<dbReference type="RefSeq" id="XP_005592700.1">
    <property type="nucleotide sequence ID" value="XM_005592643.2"/>
</dbReference>
<dbReference type="RefSeq" id="XP_045237585.1">
    <property type="nucleotide sequence ID" value="XM_045381650.2"/>
</dbReference>
<dbReference type="RefSeq" id="XP_065393690.1">
    <property type="nucleotide sequence ID" value="XM_065537618.1"/>
</dbReference>
<dbReference type="SMR" id="Q4R7R1"/>
<dbReference type="STRING" id="9541.ENSMFAP00000042700"/>
<dbReference type="Ensembl" id="ENSMFAT00000016984.2">
    <property type="protein sequence ID" value="ENSMFAP00000042700.1"/>
    <property type="gene ID" value="ENSMFAG00000040108.2"/>
</dbReference>
<dbReference type="GeneID" id="101925751"/>
<dbReference type="CTD" id="93517"/>
<dbReference type="VEuPathDB" id="HostDB:ENSMFAG00000040108"/>
<dbReference type="eggNOG" id="KOG1430">
    <property type="taxonomic scope" value="Eukaryota"/>
</dbReference>
<dbReference type="GeneTree" id="ENSGT00940000158070"/>
<dbReference type="OMA" id="IGAYKRS"/>
<dbReference type="Proteomes" id="UP000233100">
    <property type="component" value="Chromosome 20"/>
</dbReference>
<dbReference type="Bgee" id="ENSMFAG00000040108">
    <property type="expression patterns" value="Expressed in liver and 9 other cell types or tissues"/>
</dbReference>
<dbReference type="GO" id="GO:0016020">
    <property type="term" value="C:membrane"/>
    <property type="evidence" value="ECO:0007669"/>
    <property type="project" value="UniProtKB-SubCell"/>
</dbReference>
<dbReference type="GO" id="GO:0016616">
    <property type="term" value="F:oxidoreductase activity, acting on the CH-OH group of donors, NAD or NADP as acceptor"/>
    <property type="evidence" value="ECO:0007669"/>
    <property type="project" value="InterPro"/>
</dbReference>
<dbReference type="GO" id="GO:0006694">
    <property type="term" value="P:steroid biosynthetic process"/>
    <property type="evidence" value="ECO:0007669"/>
    <property type="project" value="InterPro"/>
</dbReference>
<dbReference type="CDD" id="cd09812">
    <property type="entry name" value="3b-HSD_like_1_SDR_e"/>
    <property type="match status" value="1"/>
</dbReference>
<dbReference type="FunFam" id="3.40.50.720:FF:000138">
    <property type="entry name" value="Short-chain dehydrogenase/reductase family 42E member 1"/>
    <property type="match status" value="1"/>
</dbReference>
<dbReference type="Gene3D" id="3.40.50.720">
    <property type="entry name" value="NAD(P)-binding Rossmann-like Domain"/>
    <property type="match status" value="1"/>
</dbReference>
<dbReference type="InterPro" id="IPR002225">
    <property type="entry name" value="3Beta_OHSteriod_DH/Estase"/>
</dbReference>
<dbReference type="InterPro" id="IPR050177">
    <property type="entry name" value="Lipid_A_modif_metabolic_enz"/>
</dbReference>
<dbReference type="InterPro" id="IPR036291">
    <property type="entry name" value="NAD(P)-bd_dom_sf"/>
</dbReference>
<dbReference type="PANTHER" id="PTHR43245">
    <property type="entry name" value="BIFUNCTIONAL POLYMYXIN RESISTANCE PROTEIN ARNA"/>
    <property type="match status" value="1"/>
</dbReference>
<dbReference type="PANTHER" id="PTHR43245:SF51">
    <property type="entry name" value="SHORT CHAIN DEHYDROGENASE_REDUCTASE FAMILY 42E, MEMBER 2"/>
    <property type="match status" value="1"/>
</dbReference>
<dbReference type="Pfam" id="PF01073">
    <property type="entry name" value="3Beta_HSD"/>
    <property type="match status" value="1"/>
</dbReference>
<dbReference type="SUPFAM" id="SSF51735">
    <property type="entry name" value="NAD(P)-binding Rossmann-fold domains"/>
    <property type="match status" value="1"/>
</dbReference>
<name>D42E1_MACFA</name>
<proteinExistence type="evidence at transcript level"/>
<protein>
    <recommendedName>
        <fullName evidence="2">Short-chain dehydrogenase/reductase family 42E member 1</fullName>
        <ecNumber>1.1.1.-</ecNumber>
    </recommendedName>
</protein>
<gene>
    <name type="primary">SDR42E1</name>
    <name type="ORF">QtsA-14586</name>
</gene>
<evidence type="ECO:0000250" key="1"/>
<evidence type="ECO:0000250" key="2">
    <source>
        <dbReference type="UniProtKB" id="Q8WUS8"/>
    </source>
</evidence>
<evidence type="ECO:0000255" key="3"/>
<evidence type="ECO:0000305" key="4"/>
<accession>Q4R7R1</accession>
<feature type="chain" id="PRO_0000331755" description="Short-chain dehydrogenase/reductase family 42E member 1">
    <location>
        <begin position="1"/>
        <end position="393"/>
    </location>
</feature>
<feature type="transmembrane region" description="Helical" evidence="3">
    <location>
        <begin position="282"/>
        <end position="302"/>
    </location>
</feature>
<feature type="transmembrane region" description="Helical" evidence="3">
    <location>
        <begin position="371"/>
        <end position="391"/>
    </location>
</feature>
<feature type="active site" description="Proton acceptor" evidence="1">
    <location>
        <position position="152"/>
    </location>
</feature>
<feature type="binding site" evidence="1">
    <location>
        <position position="156"/>
    </location>
    <ligand>
        <name>NAD(+)</name>
        <dbReference type="ChEBI" id="CHEBI:57540"/>
    </ligand>
</feature>